<comment type="function">
    <text evidence="1">Required for growth under high-pressure and low-temperature conditions.</text>
</comment>
<comment type="subcellular location">
    <subcellularLocation>
        <location evidence="3">Membrane</location>
        <topology evidence="3">Multi-pass membrane protein</topology>
    </subcellularLocation>
</comment>
<comment type="similarity">
    <text evidence="3">Belongs to the DLT1 family.</text>
</comment>
<protein>
    <recommendedName>
        <fullName>Defect at low temperature protein 1</fullName>
    </recommendedName>
</protein>
<name>DLT1_YEAS7</name>
<dbReference type="EMBL" id="AAFW02000021">
    <property type="protein sequence ID" value="EDN64060.1"/>
    <property type="molecule type" value="Genomic_DNA"/>
</dbReference>
<dbReference type="HOGENOM" id="CLU_066044_0_0_1"/>
<dbReference type="Proteomes" id="UP000007060">
    <property type="component" value="Unassembled WGS sequence"/>
</dbReference>
<dbReference type="GO" id="GO:0016020">
    <property type="term" value="C:membrane"/>
    <property type="evidence" value="ECO:0007669"/>
    <property type="project" value="UniProtKB-SubCell"/>
</dbReference>
<dbReference type="InterPro" id="IPR038869">
    <property type="entry name" value="DLT1"/>
</dbReference>
<dbReference type="PANTHER" id="PTHR40021">
    <property type="entry name" value="DEFECT AT LOW TEMPERATURE PROTEIN 1"/>
    <property type="match status" value="1"/>
</dbReference>
<dbReference type="PANTHER" id="PTHR40021:SF1">
    <property type="entry name" value="DEFECT AT LOW TEMPERATURE PROTEIN 1"/>
    <property type="match status" value="1"/>
</dbReference>
<keyword id="KW-0472">Membrane</keyword>
<keyword id="KW-0812">Transmembrane</keyword>
<keyword id="KW-1133">Transmembrane helix</keyword>
<feature type="chain" id="PRO_0000399026" description="Defect at low temperature protein 1">
    <location>
        <begin position="1"/>
        <end position="342"/>
    </location>
</feature>
<feature type="topological domain" description="Cytoplasmic" evidence="2">
    <location>
        <begin position="1"/>
        <end position="15"/>
    </location>
</feature>
<feature type="transmembrane region" description="Helical" evidence="2">
    <location>
        <begin position="16"/>
        <end position="36"/>
    </location>
</feature>
<feature type="topological domain" description="Extracellular" evidence="2">
    <location>
        <begin position="37"/>
        <end position="47"/>
    </location>
</feature>
<feature type="transmembrane region" description="Helical" evidence="2">
    <location>
        <begin position="48"/>
        <end position="68"/>
    </location>
</feature>
<feature type="topological domain" description="Cytoplasmic" evidence="2">
    <location>
        <begin position="69"/>
        <end position="342"/>
    </location>
</feature>
<proteinExistence type="inferred from homology"/>
<organism>
    <name type="scientific">Saccharomyces cerevisiae (strain YJM789)</name>
    <name type="common">Baker's yeast</name>
    <dbReference type="NCBI Taxonomy" id="307796"/>
    <lineage>
        <taxon>Eukaryota</taxon>
        <taxon>Fungi</taxon>
        <taxon>Dikarya</taxon>
        <taxon>Ascomycota</taxon>
        <taxon>Saccharomycotina</taxon>
        <taxon>Saccharomycetes</taxon>
        <taxon>Saccharomycetales</taxon>
        <taxon>Saccharomycetaceae</taxon>
        <taxon>Saccharomyces</taxon>
    </lineage>
</organism>
<evidence type="ECO:0000250" key="1"/>
<evidence type="ECO:0000255" key="2"/>
<evidence type="ECO:0000305" key="3"/>
<gene>
    <name type="primary">DLT1</name>
    <name type="ORF">SCY_4302</name>
</gene>
<reference key="1">
    <citation type="journal article" date="2007" name="Proc. Natl. Acad. Sci. U.S.A.">
        <title>Genome sequencing and comparative analysis of Saccharomyces cerevisiae strain YJM789.</title>
        <authorList>
            <person name="Wei W."/>
            <person name="McCusker J.H."/>
            <person name="Hyman R.W."/>
            <person name="Jones T."/>
            <person name="Ning Y."/>
            <person name="Cao Z."/>
            <person name="Gu Z."/>
            <person name="Bruno D."/>
            <person name="Miranda M."/>
            <person name="Nguyen M."/>
            <person name="Wilhelmy J."/>
            <person name="Komp C."/>
            <person name="Tamse R."/>
            <person name="Wang X."/>
            <person name="Jia P."/>
            <person name="Luedi P."/>
            <person name="Oefner P.J."/>
            <person name="David L."/>
            <person name="Dietrich F.S."/>
            <person name="Li Y."/>
            <person name="Davis R.W."/>
            <person name="Steinmetz L.M."/>
        </authorList>
    </citation>
    <scope>NUCLEOTIDE SEQUENCE [LARGE SCALE GENOMIC DNA]</scope>
    <source>
        <strain>YJM789</strain>
    </source>
</reference>
<accession>A6ZMI6</accession>
<sequence length="342" mass="39159">MSGFAKLKSWLYKASLFVSLILLIGFSVVLPIDSIAQASKSENNAFNTFIVVGALVVFGVFCIFIIIGRMLFHKSCLKDIPRRYIPITPADLPHRSSREAVLQNMERSKELTILLKKPKDPVIHDGLEPPRRCDYPLDEKLFPEYLNYADCIKSLTDRLKYHGLFLNNLDVRMNLEDTFADVVNSQFVNHNANKIQLEKAKEFIDLYETIRFSGKDVTRDQFIKFVKFCLYFGEVSLTRDTSFANLHNFKLNGSSNNIGRTESKYSINPFDENEYAQDDMHYFPEPPTHLVRESSISTVARHVSSGVDLTNSEEHPLDTDSDCNALRLKLSKADSYRSVIRH</sequence>